<proteinExistence type="inferred from homology"/>
<keyword id="KW-0093">Biotin biosynthesis</keyword>
<keyword id="KW-0489">Methyltransferase</keyword>
<keyword id="KW-1185">Reference proteome</keyword>
<keyword id="KW-0949">S-adenosyl-L-methionine</keyword>
<keyword id="KW-0808">Transferase</keyword>
<evidence type="ECO:0000255" key="1">
    <source>
        <dbReference type="HAMAP-Rule" id="MF_00835"/>
    </source>
</evidence>
<feature type="chain" id="PRO_0000412514" description="Malonyl-[acyl-carrier protein] O-methyltransferase">
    <location>
        <begin position="1"/>
        <end position="307"/>
    </location>
</feature>
<sequence>MSGNESVVNYDHFIDKRRVRKAFERAAPLYDQAAVLQREVCDRMLSRLEYIKYMPDVVLDAGSGTGYGTCKLLERYPDASMLAIDIATGMHHQARQRMNSMIPRWRQLFGVGRNQRTSRVRYVAGDIEQLPLEDSCAGLVWSNLALQWCNDLKKTFDEMRRILKNGGLFMFSTFGPDTLKELRQAFRHADDYSHVNRFADMHDIGDMLVHSGFATPVMDMEYITLTYDEVISVMRDLKAIGAHNATGARHRGLTGKNAWQKAIGHYETLRTGGKLPATFEVVYGHAWKPAPRTSILTPETRRHIGLE</sequence>
<dbReference type="EC" id="2.1.1.197" evidence="1"/>
<dbReference type="EMBL" id="CP000103">
    <property type="protein sequence ID" value="ABB74435.1"/>
    <property type="molecule type" value="Genomic_DNA"/>
</dbReference>
<dbReference type="RefSeq" id="WP_011380476.1">
    <property type="nucleotide sequence ID" value="NC_007614.1"/>
</dbReference>
<dbReference type="SMR" id="Q2Y9Y6"/>
<dbReference type="STRING" id="323848.Nmul_A1132"/>
<dbReference type="KEGG" id="nmu:Nmul_A1132"/>
<dbReference type="eggNOG" id="COG2226">
    <property type="taxonomic scope" value="Bacteria"/>
</dbReference>
<dbReference type="HOGENOM" id="CLU_046586_2_1_4"/>
<dbReference type="OrthoDB" id="9760689at2"/>
<dbReference type="UniPathway" id="UPA00078"/>
<dbReference type="Proteomes" id="UP000002718">
    <property type="component" value="Chromosome"/>
</dbReference>
<dbReference type="GO" id="GO:0010340">
    <property type="term" value="F:carboxyl-O-methyltransferase activity"/>
    <property type="evidence" value="ECO:0007669"/>
    <property type="project" value="UniProtKB-UniRule"/>
</dbReference>
<dbReference type="GO" id="GO:0102130">
    <property type="term" value="F:malonyl-CoA methyltransferase activity"/>
    <property type="evidence" value="ECO:0007669"/>
    <property type="project" value="UniProtKB-EC"/>
</dbReference>
<dbReference type="GO" id="GO:0008757">
    <property type="term" value="F:S-adenosylmethionine-dependent methyltransferase activity"/>
    <property type="evidence" value="ECO:0007669"/>
    <property type="project" value="InterPro"/>
</dbReference>
<dbReference type="GO" id="GO:0009102">
    <property type="term" value="P:biotin biosynthetic process"/>
    <property type="evidence" value="ECO:0007669"/>
    <property type="project" value="UniProtKB-UniRule"/>
</dbReference>
<dbReference type="GO" id="GO:0032259">
    <property type="term" value="P:methylation"/>
    <property type="evidence" value="ECO:0007669"/>
    <property type="project" value="UniProtKB-KW"/>
</dbReference>
<dbReference type="CDD" id="cd02440">
    <property type="entry name" value="AdoMet_MTases"/>
    <property type="match status" value="1"/>
</dbReference>
<dbReference type="Gene3D" id="3.40.50.150">
    <property type="entry name" value="Vaccinia Virus protein VP39"/>
    <property type="match status" value="1"/>
</dbReference>
<dbReference type="HAMAP" id="MF_00835">
    <property type="entry name" value="BioC"/>
    <property type="match status" value="1"/>
</dbReference>
<dbReference type="InterPro" id="IPR011814">
    <property type="entry name" value="BioC"/>
</dbReference>
<dbReference type="InterPro" id="IPR050602">
    <property type="entry name" value="Malonyl-ACP_OMT"/>
</dbReference>
<dbReference type="InterPro" id="IPR013216">
    <property type="entry name" value="Methyltransf_11"/>
</dbReference>
<dbReference type="InterPro" id="IPR029063">
    <property type="entry name" value="SAM-dependent_MTases_sf"/>
</dbReference>
<dbReference type="NCBIfam" id="TIGR02072">
    <property type="entry name" value="BioC"/>
    <property type="match status" value="1"/>
</dbReference>
<dbReference type="PANTHER" id="PTHR13090">
    <property type="entry name" value="ARGININE-HYDROXYLASE NDUFAF5, MITOCHONDRIAL"/>
    <property type="match status" value="1"/>
</dbReference>
<dbReference type="PANTHER" id="PTHR13090:SF1">
    <property type="entry name" value="ARGININE-HYDROXYLASE NDUFAF5, MITOCHONDRIAL"/>
    <property type="match status" value="1"/>
</dbReference>
<dbReference type="Pfam" id="PF08241">
    <property type="entry name" value="Methyltransf_11"/>
    <property type="match status" value="1"/>
</dbReference>
<dbReference type="SUPFAM" id="SSF53335">
    <property type="entry name" value="S-adenosyl-L-methionine-dependent methyltransferases"/>
    <property type="match status" value="1"/>
</dbReference>
<organism>
    <name type="scientific">Nitrosospira multiformis (strain ATCC 25196 / NCIMB 11849 / C 71)</name>
    <dbReference type="NCBI Taxonomy" id="323848"/>
    <lineage>
        <taxon>Bacteria</taxon>
        <taxon>Pseudomonadati</taxon>
        <taxon>Pseudomonadota</taxon>
        <taxon>Betaproteobacteria</taxon>
        <taxon>Nitrosomonadales</taxon>
        <taxon>Nitrosomonadaceae</taxon>
        <taxon>Nitrosospira</taxon>
    </lineage>
</organism>
<comment type="function">
    <text evidence="1">Converts the free carboxyl group of a malonyl-thioester to its methyl ester by transfer of a methyl group from S-adenosyl-L-methionine (SAM). It allows to synthesize pimeloyl-ACP via the fatty acid synthetic pathway.</text>
</comment>
<comment type="catalytic activity">
    <reaction evidence="1">
        <text>malonyl-[ACP] + S-adenosyl-L-methionine = malonyl-[ACP] methyl ester + S-adenosyl-L-homocysteine</text>
        <dbReference type="Rhea" id="RHEA:17105"/>
        <dbReference type="Rhea" id="RHEA-COMP:9623"/>
        <dbReference type="Rhea" id="RHEA-COMP:9954"/>
        <dbReference type="ChEBI" id="CHEBI:57856"/>
        <dbReference type="ChEBI" id="CHEBI:59789"/>
        <dbReference type="ChEBI" id="CHEBI:78449"/>
        <dbReference type="ChEBI" id="CHEBI:78845"/>
        <dbReference type="EC" id="2.1.1.197"/>
    </reaction>
</comment>
<comment type="pathway">
    <text evidence="1">Cofactor biosynthesis; biotin biosynthesis.</text>
</comment>
<comment type="similarity">
    <text evidence="1">Belongs to the methyltransferase superfamily.</text>
</comment>
<name>BIOC_NITMU</name>
<accession>Q2Y9Y6</accession>
<gene>
    <name evidence="1" type="primary">bioC</name>
    <name type="ordered locus">Nmul_A1132</name>
</gene>
<reference key="1">
    <citation type="submission" date="2005-08" db="EMBL/GenBank/DDBJ databases">
        <title>Complete sequence of chromosome 1 of Nitrosospira multiformis ATCC 25196.</title>
        <authorList>
            <person name="Copeland A."/>
            <person name="Lucas S."/>
            <person name="Lapidus A."/>
            <person name="Barry K."/>
            <person name="Detter J.C."/>
            <person name="Glavina T."/>
            <person name="Hammon N."/>
            <person name="Israni S."/>
            <person name="Pitluck S."/>
            <person name="Chain P."/>
            <person name="Malfatti S."/>
            <person name="Shin M."/>
            <person name="Vergez L."/>
            <person name="Schmutz J."/>
            <person name="Larimer F."/>
            <person name="Land M."/>
            <person name="Hauser L."/>
            <person name="Kyrpides N."/>
            <person name="Lykidis A."/>
            <person name="Richardson P."/>
        </authorList>
    </citation>
    <scope>NUCLEOTIDE SEQUENCE [LARGE SCALE GENOMIC DNA]</scope>
    <source>
        <strain>ATCC 25196 / NCIMB 11849 / C 71</strain>
    </source>
</reference>
<protein>
    <recommendedName>
        <fullName evidence="1">Malonyl-[acyl-carrier protein] O-methyltransferase</fullName>
        <shortName evidence="1">Malonyl-ACP O-methyltransferase</shortName>
        <ecNumber evidence="1">2.1.1.197</ecNumber>
    </recommendedName>
    <alternativeName>
        <fullName evidence="1">Biotin synthesis protein BioC</fullName>
    </alternativeName>
</protein>